<feature type="chain" id="PRO_0000234391" description="Protein orai-2">
    <location>
        <begin position="1"/>
        <end position="254"/>
    </location>
</feature>
<feature type="transmembrane region" description="Helical" evidence="1">
    <location>
        <begin position="66"/>
        <end position="83"/>
    </location>
</feature>
<feature type="transmembrane region" description="Helical" evidence="1">
    <location>
        <begin position="94"/>
        <end position="114"/>
    </location>
</feature>
<feature type="transmembrane region" description="Helical" evidence="1">
    <location>
        <begin position="148"/>
        <end position="168"/>
    </location>
</feature>
<feature type="transmembrane region" description="Helical" evidence="1">
    <location>
        <begin position="196"/>
        <end position="216"/>
    </location>
</feature>
<feature type="site" description="Confers selective permeability to Ca(2+) ions" evidence="8">
    <location>
        <position position="80"/>
    </location>
</feature>
<feature type="sequence variant" id="VAR_053543" description="In dbSNP:rs34947403.">
    <original>A</original>
    <variation>P</variation>
    <location>
        <position position="15"/>
    </location>
</feature>
<feature type="mutagenesis site" description="Has dominant negative effect. Impairs store-operated Ca(2+) influx. Decreases regenerative Ca(2+) oscillations." evidence="8">
    <original>E</original>
    <variation>Q</variation>
    <location>
        <position position="80"/>
    </location>
</feature>
<feature type="mutagenesis site" description="Reduces fast Ca(2+)-dependent inactivation; when associated with A-235 and A-236." evidence="6">
    <original>E</original>
    <variation>A</variation>
    <location>
        <position position="233"/>
    </location>
</feature>
<feature type="mutagenesis site" description="Reduces fast Ca(2+)-dependent inactivation; when associated with A-233 and A-236." evidence="6">
    <original>E</original>
    <variation>A</variation>
    <location>
        <position position="235"/>
    </location>
</feature>
<feature type="mutagenesis site" description="Reduces fast Ca(2+)-dependent inactivation; when associated with A-233 and A-235." evidence="6">
    <original>E</original>
    <variation>A</variation>
    <location>
        <position position="236"/>
    </location>
</feature>
<sequence>MSAELNVPIDPSAPACPEPGHKGMDYRDWVRRSYLELVTSNHHSVQALSWRKLYLSRAKLKASSRTSALLSGFAMVAMVEVQLETQYQYPRPLLIAFSACTTVLVAVHLFALLISTCILPNVEAVSNIHNLNSISESPHERMHPYIELAWGFSTVLGILLFLAEVVLLCWIKFLPVDARRQPGPPPGPGSHTGWQAALVSTIIMVPVGLIFVVFTIHFYRSLVRHKTERHNREIEELHKLKVQLDGHERSLQVL</sequence>
<comment type="function">
    <text evidence="2 3 4 5 6 8 9">Pore-forming subunit of inward rectifying Ca(2+) release-activated Ca(2+) (CRAC) channels. Assembles with ORAI1 and ORAI3 to form hexameric CRAC channels that mediate Ca(2+) influx upon depletion of endoplasmic reticulum Ca(2+) store and channel activation by Ca(2+) sensor STIM1, a process known as store-operated Ca(2+) entry (SOCE). Various pore subunit combinations may account for distinct CRAC channel spatiotemporal and cell-type specific dynamics. ORAI1 mainly contributes to the generation of Ca(2+) plateaus involved in sustained Ca(2+) entry and is dispensable for cytosolic Ca(2+) oscillations, whereas ORAI2 and ORAI3 generate oscillatory patterns. CRAC channels assemble in Ca(2+) signaling microdomains where Ca(2+) influx is coupled to calmodulin and calcineurin signaling and activation of NFAT transcription factors recruited to ORAI1 via AKAP5. CRAC channels are the main pathway for Ca(2+) influx in T cells and promote the immune response to pathogens by activating NFAT-dependent cytokine and chemokine transcription.</text>
</comment>
<comment type="catalytic activity">
    <reaction evidence="2 3 4 5 6 8 9">
        <text>Ca(2+)(in) = Ca(2+)(out)</text>
        <dbReference type="Rhea" id="RHEA:29671"/>
        <dbReference type="ChEBI" id="CHEBI:29108"/>
    </reaction>
    <physiologicalReaction direction="right-to-left" evidence="2 3 4 5 6 8 9">
        <dbReference type="Rhea" id="RHEA:29673"/>
    </physiologicalReaction>
</comment>
<comment type="activity regulation">
    <text evidence="2 6">CRAC channels are regulated by fast Ca(2+)-dependent inactivation (FCDI), a mechanism that limits Ca(2+) influx and cell toxicity. ORAI2 channels display prominent FCDI (PubMed:19706554). Inhibited by lanthanides such as Gd(3+) ions (PubMed:16807233).</text>
</comment>
<comment type="subunit">
    <text evidence="3 6 7 8">Oligomerizes in homomeric and heteromeric ORAI complexes. Native CRAC channels most likely consist of hexameric ORAI heteromers, implying that diverse ORAI1, ORAI2 and ORAI3 subunit combinations with distinct biophysical properties can operate in a cell-type specific way (PubMed:17442569, PubMed:32415068). Interacts with STIM1; this regulates channel activity (PubMed:19706554, PubMed:32415068). Interacts with CRACR2A/EFCAB4B.</text>
</comment>
<comment type="subcellular location">
    <subcellularLocation>
        <location evidence="4">Cell membrane</location>
        <topology evidence="1">Multi-pass membrane protein</topology>
    </subcellularLocation>
    <text evidence="6">Colocalizes with STIM1 upon store depletion.</text>
</comment>
<comment type="similarity">
    <text evidence="10">Belongs to the Orai family.</text>
</comment>
<comment type="sequence caution" evidence="10">
    <conflict type="erroneous translation">
        <sequence resource="EMBL-CDS" id="AAG23755"/>
    </conflict>
    <text>Wrong choice of CDS.</text>
</comment>
<comment type="sequence caution" evidence="10">
    <conflict type="erroneous gene model prediction">
        <sequence resource="EMBL-CDS" id="AAP22352"/>
    </conflict>
</comment>
<comment type="sequence caution" evidence="10">
    <conflict type="erroneous translation">
        <sequence resource="EMBL-CDS" id="CAG33568"/>
    </conflict>
    <text>Wrong choice of CDS.</text>
</comment>
<proteinExistence type="evidence at protein level"/>
<name>ORAI2_HUMAN</name>
<keyword id="KW-0106">Calcium</keyword>
<keyword id="KW-0107">Calcium channel</keyword>
<keyword id="KW-0109">Calcium transport</keyword>
<keyword id="KW-1003">Cell membrane</keyword>
<keyword id="KW-0407">Ion channel</keyword>
<keyword id="KW-0406">Ion transport</keyword>
<keyword id="KW-0472">Membrane</keyword>
<keyword id="KW-1267">Proteomics identification</keyword>
<keyword id="KW-1185">Reference proteome</keyword>
<keyword id="KW-0812">Transmembrane</keyword>
<keyword id="KW-1133">Transmembrane helix</keyword>
<keyword id="KW-0813">Transport</keyword>
<gene>
    <name type="primary">ORAI2</name>
    <name type="synonym">C7orf19</name>
    <name type="synonym">CBCIP2</name>
    <name type="synonym">TMEM142B</name>
    <name type="ORF">PP1729</name>
</gene>
<dbReference type="EMBL" id="AK027639">
    <property type="protein sequence ID" value="BAB55256.1"/>
    <property type="molecule type" value="mRNA"/>
</dbReference>
<dbReference type="EMBL" id="AC093668">
    <property type="protein sequence ID" value="AAP22351.1"/>
    <property type="molecule type" value="Genomic_DNA"/>
</dbReference>
<dbReference type="EMBL" id="AC093668">
    <property type="protein sequence ID" value="AAP22352.1"/>
    <property type="status" value="ALT_SEQ"/>
    <property type="molecule type" value="Genomic_DNA"/>
</dbReference>
<dbReference type="EMBL" id="BC069270">
    <property type="protein sequence ID" value="AAH69270.1"/>
    <property type="molecule type" value="mRNA"/>
</dbReference>
<dbReference type="EMBL" id="AF258552">
    <property type="protein sequence ID" value="AAG23755.1"/>
    <property type="status" value="ALT_SEQ"/>
    <property type="molecule type" value="mRNA"/>
</dbReference>
<dbReference type="EMBL" id="CR457287">
    <property type="protein sequence ID" value="CAG33568.1"/>
    <property type="status" value="ALT_SEQ"/>
    <property type="molecule type" value="mRNA"/>
</dbReference>
<dbReference type="CCDS" id="CCDS5722.1"/>
<dbReference type="RefSeq" id="NP_001119812.1">
    <property type="nucleotide sequence ID" value="NM_001126340.3"/>
</dbReference>
<dbReference type="RefSeq" id="NP_001258747.1">
    <property type="nucleotide sequence ID" value="NM_001271818.2"/>
</dbReference>
<dbReference type="RefSeq" id="NP_116220.1">
    <property type="nucleotide sequence ID" value="NM_032831.4"/>
</dbReference>
<dbReference type="SMR" id="Q96SN7"/>
<dbReference type="BioGRID" id="123192">
    <property type="interactions" value="6"/>
</dbReference>
<dbReference type="DIP" id="DIP-48944N"/>
<dbReference type="FunCoup" id="Q96SN7">
    <property type="interactions" value="579"/>
</dbReference>
<dbReference type="IntAct" id="Q96SN7">
    <property type="interactions" value="9"/>
</dbReference>
<dbReference type="STRING" id="9606.ENSP00000348752"/>
<dbReference type="BindingDB" id="Q96SN7"/>
<dbReference type="ChEMBL" id="CHEMBL4888450"/>
<dbReference type="GuidetoPHARMACOLOGY" id="2965"/>
<dbReference type="iPTMnet" id="Q96SN7"/>
<dbReference type="PhosphoSitePlus" id="Q96SN7"/>
<dbReference type="BioMuta" id="ORAI2"/>
<dbReference type="DMDM" id="74732728"/>
<dbReference type="jPOST" id="Q96SN7"/>
<dbReference type="MassIVE" id="Q96SN7"/>
<dbReference type="PaxDb" id="9606-ENSP00000348752"/>
<dbReference type="PeptideAtlas" id="Q96SN7"/>
<dbReference type="ProteomicsDB" id="78130"/>
<dbReference type="Antibodypedia" id="31061">
    <property type="antibodies" value="167 antibodies from 28 providers"/>
</dbReference>
<dbReference type="DNASU" id="80228"/>
<dbReference type="Ensembl" id="ENST00000356387.6">
    <property type="protein sequence ID" value="ENSP00000348752.2"/>
    <property type="gene ID" value="ENSG00000160991.17"/>
</dbReference>
<dbReference type="Ensembl" id="ENST00000403646.8">
    <property type="protein sequence ID" value="ENSP00000385489.3"/>
    <property type="gene ID" value="ENSG00000160991.17"/>
</dbReference>
<dbReference type="Ensembl" id="ENST00000473939.2">
    <property type="protein sequence ID" value="ENSP00000417928.1"/>
    <property type="gene ID" value="ENSG00000160991.17"/>
</dbReference>
<dbReference type="Ensembl" id="ENST00000478730.7">
    <property type="protein sequence ID" value="ENSP00000418140.1"/>
    <property type="gene ID" value="ENSG00000160991.17"/>
</dbReference>
<dbReference type="Ensembl" id="ENST00000495936.7">
    <property type="protein sequence ID" value="ENSP00000420178.2"/>
    <property type="gene ID" value="ENSG00000160991.17"/>
</dbReference>
<dbReference type="Ensembl" id="ENST00000498661.6">
    <property type="protein sequence ID" value="ENSP00000418464.2"/>
    <property type="gene ID" value="ENSG00000160991.17"/>
</dbReference>
<dbReference type="Ensembl" id="ENST00000611770.5">
    <property type="protein sequence ID" value="ENSP00000478113.1"/>
    <property type="gene ID" value="ENSG00000160991.17"/>
</dbReference>
<dbReference type="GeneID" id="80228"/>
<dbReference type="KEGG" id="hsa:80228"/>
<dbReference type="MANE-Select" id="ENST00000495936.7">
    <property type="protein sequence ID" value="ENSP00000420178.2"/>
    <property type="RefSeq nucleotide sequence ID" value="NM_001126340.3"/>
    <property type="RefSeq protein sequence ID" value="NP_001119812.1"/>
</dbReference>
<dbReference type="UCSC" id="uc003uzj.3">
    <property type="organism name" value="human"/>
</dbReference>
<dbReference type="AGR" id="HGNC:21667"/>
<dbReference type="CTD" id="80228"/>
<dbReference type="DisGeNET" id="80228"/>
<dbReference type="GeneCards" id="ORAI2"/>
<dbReference type="HGNC" id="HGNC:21667">
    <property type="gene designation" value="ORAI2"/>
</dbReference>
<dbReference type="HPA" id="ENSG00000160991">
    <property type="expression patterns" value="Tissue enhanced (pituitary)"/>
</dbReference>
<dbReference type="MIM" id="610929">
    <property type="type" value="gene"/>
</dbReference>
<dbReference type="neXtProt" id="NX_Q96SN7"/>
<dbReference type="OpenTargets" id="ENSG00000160991"/>
<dbReference type="PharmGKB" id="PA162398454"/>
<dbReference type="VEuPathDB" id="HostDB:ENSG00000160991"/>
<dbReference type="eggNOG" id="KOG4298">
    <property type="taxonomic scope" value="Eukaryota"/>
</dbReference>
<dbReference type="GeneTree" id="ENSGT00390000015354"/>
<dbReference type="InParanoid" id="Q96SN7"/>
<dbReference type="OMA" id="LEMEYNY"/>
<dbReference type="OrthoDB" id="61124at2759"/>
<dbReference type="PAN-GO" id="Q96SN7">
    <property type="GO annotations" value="3 GO annotations based on evolutionary models"/>
</dbReference>
<dbReference type="PhylomeDB" id="Q96SN7"/>
<dbReference type="TreeFam" id="TF313576"/>
<dbReference type="PathwayCommons" id="Q96SN7"/>
<dbReference type="Reactome" id="R-HSA-139853">
    <property type="pathway name" value="Elevation of cytosolic Ca2+ levels"/>
</dbReference>
<dbReference type="Reactome" id="R-HSA-5578775">
    <property type="pathway name" value="Ion homeostasis"/>
</dbReference>
<dbReference type="Reactome" id="R-HSA-983695">
    <property type="pathway name" value="Antigen activates B Cell Receptor (BCR) leading to generation of second messengers"/>
</dbReference>
<dbReference type="SignaLink" id="Q96SN7"/>
<dbReference type="BioGRID-ORCS" id="80228">
    <property type="hits" value="13 hits in 1150 CRISPR screens"/>
</dbReference>
<dbReference type="ChiTaRS" id="ORAI2">
    <property type="organism name" value="human"/>
</dbReference>
<dbReference type="GeneWiki" id="ORAI2"/>
<dbReference type="GenomeRNAi" id="80228"/>
<dbReference type="Pharos" id="Q96SN7">
    <property type="development level" value="Tchem"/>
</dbReference>
<dbReference type="PRO" id="PR:Q96SN7"/>
<dbReference type="Proteomes" id="UP000005640">
    <property type="component" value="Chromosome 7"/>
</dbReference>
<dbReference type="RNAct" id="Q96SN7">
    <property type="molecule type" value="protein"/>
</dbReference>
<dbReference type="Bgee" id="ENSG00000160991">
    <property type="expression patterns" value="Expressed in renal medulla and 188 other cell types or tissues"/>
</dbReference>
<dbReference type="ExpressionAtlas" id="Q96SN7">
    <property type="expression patterns" value="baseline and differential"/>
</dbReference>
<dbReference type="GO" id="GO:0016020">
    <property type="term" value="C:membrane"/>
    <property type="evidence" value="ECO:0000318"/>
    <property type="project" value="GO_Central"/>
</dbReference>
<dbReference type="GO" id="GO:0005886">
    <property type="term" value="C:plasma membrane"/>
    <property type="evidence" value="ECO:0000314"/>
    <property type="project" value="UniProtKB"/>
</dbReference>
<dbReference type="GO" id="GO:0015279">
    <property type="term" value="F:store-operated calcium channel activity"/>
    <property type="evidence" value="ECO:0000314"/>
    <property type="project" value="UniProtKB"/>
</dbReference>
<dbReference type="GO" id="GO:0002115">
    <property type="term" value="P:store-operated calcium entry"/>
    <property type="evidence" value="ECO:0000314"/>
    <property type="project" value="UniProtKB"/>
</dbReference>
<dbReference type="FunFam" id="1.20.140.140:FF:000001">
    <property type="entry name" value="Calcium release-activated calcium modulator 1"/>
    <property type="match status" value="1"/>
</dbReference>
<dbReference type="Gene3D" id="1.20.140.140">
    <property type="entry name" value="Calcium release-activated calcium channel protein Orai"/>
    <property type="match status" value="1"/>
</dbReference>
<dbReference type="InterPro" id="IPR012446">
    <property type="entry name" value="CRAC_channel"/>
</dbReference>
<dbReference type="InterPro" id="IPR038350">
    <property type="entry name" value="Orai_sf"/>
</dbReference>
<dbReference type="PANTHER" id="PTHR31501">
    <property type="entry name" value="CALCIUM RELEASE-ACTIVATED CALCIUM CHANNEL PROTEIN 1"/>
    <property type="match status" value="1"/>
</dbReference>
<dbReference type="PANTHER" id="PTHR31501:SF5">
    <property type="entry name" value="PROTEIN ORAI-2"/>
    <property type="match status" value="1"/>
</dbReference>
<dbReference type="Pfam" id="PF07856">
    <property type="entry name" value="Orai-1"/>
    <property type="match status" value="1"/>
</dbReference>
<evidence type="ECO:0000255" key="1"/>
<evidence type="ECO:0000269" key="2">
    <source>
    </source>
</evidence>
<evidence type="ECO:0000269" key="3">
    <source>
    </source>
</evidence>
<evidence type="ECO:0000269" key="4">
    <source>
    </source>
</evidence>
<evidence type="ECO:0000269" key="5">
    <source>
    </source>
</evidence>
<evidence type="ECO:0000269" key="6">
    <source>
    </source>
</evidence>
<evidence type="ECO:0000269" key="7">
    <source>
    </source>
</evidence>
<evidence type="ECO:0000269" key="8">
    <source>
    </source>
</evidence>
<evidence type="ECO:0000269" key="9">
    <source>
    </source>
</evidence>
<evidence type="ECO:0000305" key="10"/>
<accession>Q96SN7</accession>
<accession>Q6IA68</accession>
<accession>Q8WY94</accession>
<accession>Q9H9Y3</accession>
<reference key="1">
    <citation type="journal article" date="2004" name="Nat. Genet.">
        <title>Complete sequencing and characterization of 21,243 full-length human cDNAs.</title>
        <authorList>
            <person name="Ota T."/>
            <person name="Suzuki Y."/>
            <person name="Nishikawa T."/>
            <person name="Otsuki T."/>
            <person name="Sugiyama T."/>
            <person name="Irie R."/>
            <person name="Wakamatsu A."/>
            <person name="Hayashi K."/>
            <person name="Sato H."/>
            <person name="Nagai K."/>
            <person name="Kimura K."/>
            <person name="Makita H."/>
            <person name="Sekine M."/>
            <person name="Obayashi M."/>
            <person name="Nishi T."/>
            <person name="Shibahara T."/>
            <person name="Tanaka T."/>
            <person name="Ishii S."/>
            <person name="Yamamoto J."/>
            <person name="Saito K."/>
            <person name="Kawai Y."/>
            <person name="Isono Y."/>
            <person name="Nakamura Y."/>
            <person name="Nagahari K."/>
            <person name="Murakami K."/>
            <person name="Yasuda T."/>
            <person name="Iwayanagi T."/>
            <person name="Wagatsuma M."/>
            <person name="Shiratori A."/>
            <person name="Sudo H."/>
            <person name="Hosoiri T."/>
            <person name="Kaku Y."/>
            <person name="Kodaira H."/>
            <person name="Kondo H."/>
            <person name="Sugawara M."/>
            <person name="Takahashi M."/>
            <person name="Kanda K."/>
            <person name="Yokoi T."/>
            <person name="Furuya T."/>
            <person name="Kikkawa E."/>
            <person name="Omura Y."/>
            <person name="Abe K."/>
            <person name="Kamihara K."/>
            <person name="Katsuta N."/>
            <person name="Sato K."/>
            <person name="Tanikawa M."/>
            <person name="Yamazaki M."/>
            <person name="Ninomiya K."/>
            <person name="Ishibashi T."/>
            <person name="Yamashita H."/>
            <person name="Murakawa K."/>
            <person name="Fujimori K."/>
            <person name="Tanai H."/>
            <person name="Kimata M."/>
            <person name="Watanabe M."/>
            <person name="Hiraoka S."/>
            <person name="Chiba Y."/>
            <person name="Ishida S."/>
            <person name="Ono Y."/>
            <person name="Takiguchi S."/>
            <person name="Watanabe S."/>
            <person name="Yosida M."/>
            <person name="Hotuta T."/>
            <person name="Kusano J."/>
            <person name="Kanehori K."/>
            <person name="Takahashi-Fujii A."/>
            <person name="Hara H."/>
            <person name="Tanase T.-O."/>
            <person name="Nomura Y."/>
            <person name="Togiya S."/>
            <person name="Komai F."/>
            <person name="Hara R."/>
            <person name="Takeuchi K."/>
            <person name="Arita M."/>
            <person name="Imose N."/>
            <person name="Musashino K."/>
            <person name="Yuuki H."/>
            <person name="Oshima A."/>
            <person name="Sasaki N."/>
            <person name="Aotsuka S."/>
            <person name="Yoshikawa Y."/>
            <person name="Matsunawa H."/>
            <person name="Ichihara T."/>
            <person name="Shiohata N."/>
            <person name="Sano S."/>
            <person name="Moriya S."/>
            <person name="Momiyama H."/>
            <person name="Satoh N."/>
            <person name="Takami S."/>
            <person name="Terashima Y."/>
            <person name="Suzuki O."/>
            <person name="Nakagawa S."/>
            <person name="Senoh A."/>
            <person name="Mizoguchi H."/>
            <person name="Goto Y."/>
            <person name="Shimizu F."/>
            <person name="Wakebe H."/>
            <person name="Hishigaki H."/>
            <person name="Watanabe T."/>
            <person name="Sugiyama A."/>
            <person name="Takemoto M."/>
            <person name="Kawakami B."/>
            <person name="Yamazaki M."/>
            <person name="Watanabe K."/>
            <person name="Kumagai A."/>
            <person name="Itakura S."/>
            <person name="Fukuzumi Y."/>
            <person name="Fujimori Y."/>
            <person name="Komiyama M."/>
            <person name="Tashiro H."/>
            <person name="Tanigami A."/>
            <person name="Fujiwara T."/>
            <person name="Ono T."/>
            <person name="Yamada K."/>
            <person name="Fujii Y."/>
            <person name="Ozaki K."/>
            <person name="Hirao M."/>
            <person name="Ohmori Y."/>
            <person name="Kawabata A."/>
            <person name="Hikiji T."/>
            <person name="Kobatake N."/>
            <person name="Inagaki H."/>
            <person name="Ikema Y."/>
            <person name="Okamoto S."/>
            <person name="Okitani R."/>
            <person name="Kawakami T."/>
            <person name="Noguchi S."/>
            <person name="Itoh T."/>
            <person name="Shigeta K."/>
            <person name="Senba T."/>
            <person name="Matsumura K."/>
            <person name="Nakajima Y."/>
            <person name="Mizuno T."/>
            <person name="Morinaga M."/>
            <person name="Sasaki M."/>
            <person name="Togashi T."/>
            <person name="Oyama M."/>
            <person name="Hata H."/>
            <person name="Watanabe M."/>
            <person name="Komatsu T."/>
            <person name="Mizushima-Sugano J."/>
            <person name="Satoh T."/>
            <person name="Shirai Y."/>
            <person name="Takahashi Y."/>
            <person name="Nakagawa K."/>
            <person name="Okumura K."/>
            <person name="Nagase T."/>
            <person name="Nomura N."/>
            <person name="Kikuchi H."/>
            <person name="Masuho Y."/>
            <person name="Yamashita R."/>
            <person name="Nakai K."/>
            <person name="Yada T."/>
            <person name="Nakamura Y."/>
            <person name="Ohara O."/>
            <person name="Isogai T."/>
            <person name="Sugano S."/>
        </authorList>
    </citation>
    <scope>NUCLEOTIDE SEQUENCE [LARGE SCALE MRNA]</scope>
    <source>
        <tissue>Teratocarcinoma</tissue>
    </source>
</reference>
<reference key="2">
    <citation type="journal article" date="2003" name="Nature">
        <title>The DNA sequence of human chromosome 7.</title>
        <authorList>
            <person name="Hillier L.W."/>
            <person name="Fulton R.S."/>
            <person name="Fulton L.A."/>
            <person name="Graves T.A."/>
            <person name="Pepin K.H."/>
            <person name="Wagner-McPherson C."/>
            <person name="Layman D."/>
            <person name="Maas J."/>
            <person name="Jaeger S."/>
            <person name="Walker R."/>
            <person name="Wylie K."/>
            <person name="Sekhon M."/>
            <person name="Becker M.C."/>
            <person name="O'Laughlin M.D."/>
            <person name="Schaller M.E."/>
            <person name="Fewell G.A."/>
            <person name="Delehaunty K.D."/>
            <person name="Miner T.L."/>
            <person name="Nash W.E."/>
            <person name="Cordes M."/>
            <person name="Du H."/>
            <person name="Sun H."/>
            <person name="Edwards J."/>
            <person name="Bradshaw-Cordum H."/>
            <person name="Ali J."/>
            <person name="Andrews S."/>
            <person name="Isak A."/>
            <person name="Vanbrunt A."/>
            <person name="Nguyen C."/>
            <person name="Du F."/>
            <person name="Lamar B."/>
            <person name="Courtney L."/>
            <person name="Kalicki J."/>
            <person name="Ozersky P."/>
            <person name="Bielicki L."/>
            <person name="Scott K."/>
            <person name="Holmes A."/>
            <person name="Harkins R."/>
            <person name="Harris A."/>
            <person name="Strong C.M."/>
            <person name="Hou S."/>
            <person name="Tomlinson C."/>
            <person name="Dauphin-Kohlberg S."/>
            <person name="Kozlowicz-Reilly A."/>
            <person name="Leonard S."/>
            <person name="Rohlfing T."/>
            <person name="Rock S.M."/>
            <person name="Tin-Wollam A.-M."/>
            <person name="Abbott A."/>
            <person name="Minx P."/>
            <person name="Maupin R."/>
            <person name="Strowmatt C."/>
            <person name="Latreille P."/>
            <person name="Miller N."/>
            <person name="Johnson D."/>
            <person name="Murray J."/>
            <person name="Woessner J.P."/>
            <person name="Wendl M.C."/>
            <person name="Yang S.-P."/>
            <person name="Schultz B.R."/>
            <person name="Wallis J.W."/>
            <person name="Spieth J."/>
            <person name="Bieri T.A."/>
            <person name="Nelson J.O."/>
            <person name="Berkowicz N."/>
            <person name="Wohldmann P.E."/>
            <person name="Cook L.L."/>
            <person name="Hickenbotham M.T."/>
            <person name="Eldred J."/>
            <person name="Williams D."/>
            <person name="Bedell J.A."/>
            <person name="Mardis E.R."/>
            <person name="Clifton S.W."/>
            <person name="Chissoe S.L."/>
            <person name="Marra M.A."/>
            <person name="Raymond C."/>
            <person name="Haugen E."/>
            <person name="Gillett W."/>
            <person name="Zhou Y."/>
            <person name="James R."/>
            <person name="Phelps K."/>
            <person name="Iadanoto S."/>
            <person name="Bubb K."/>
            <person name="Simms E."/>
            <person name="Levy R."/>
            <person name="Clendenning J."/>
            <person name="Kaul R."/>
            <person name="Kent W.J."/>
            <person name="Furey T.S."/>
            <person name="Baertsch R.A."/>
            <person name="Brent M.R."/>
            <person name="Keibler E."/>
            <person name="Flicek P."/>
            <person name="Bork P."/>
            <person name="Suyama M."/>
            <person name="Bailey J.A."/>
            <person name="Portnoy M.E."/>
            <person name="Torrents D."/>
            <person name="Chinwalla A.T."/>
            <person name="Gish W.R."/>
            <person name="Eddy S.R."/>
            <person name="McPherson J.D."/>
            <person name="Olson M.V."/>
            <person name="Eichler E.E."/>
            <person name="Green E.D."/>
            <person name="Waterston R.H."/>
            <person name="Wilson R.K."/>
        </authorList>
    </citation>
    <scope>NUCLEOTIDE SEQUENCE [LARGE SCALE GENOMIC DNA]</scope>
</reference>
<reference key="3">
    <citation type="journal article" date="2004" name="Genome Res.">
        <title>The status, quality, and expansion of the NIH full-length cDNA project: the Mammalian Gene Collection (MGC).</title>
        <authorList>
            <consortium name="The MGC Project Team"/>
        </authorList>
    </citation>
    <scope>NUCLEOTIDE SEQUENCE [LARGE SCALE MRNA]</scope>
    <source>
        <tissue>Brain</tissue>
    </source>
</reference>
<reference key="4">
    <citation type="journal article" date="2004" name="Proc. Natl. Acad. Sci. U.S.A.">
        <title>Large-scale cDNA transfection screening for genes related to cancer development and progression.</title>
        <authorList>
            <person name="Wan D."/>
            <person name="Gong Y."/>
            <person name="Qin W."/>
            <person name="Zhang P."/>
            <person name="Li J."/>
            <person name="Wei L."/>
            <person name="Zhou X."/>
            <person name="Li H."/>
            <person name="Qiu X."/>
            <person name="Zhong F."/>
            <person name="He L."/>
            <person name="Yu J."/>
            <person name="Yao G."/>
            <person name="Jiang H."/>
            <person name="Qian L."/>
            <person name="Yu Y."/>
            <person name="Shu H."/>
            <person name="Chen X."/>
            <person name="Xu H."/>
            <person name="Guo M."/>
            <person name="Pan Z."/>
            <person name="Chen Y."/>
            <person name="Ge C."/>
            <person name="Yang S."/>
            <person name="Gu J."/>
        </authorList>
    </citation>
    <scope>NUCLEOTIDE SEQUENCE [LARGE SCALE MRNA] OF 191-254</scope>
</reference>
<reference key="5">
    <citation type="submission" date="2004-06" db="EMBL/GenBank/DDBJ databases">
        <title>Cloning of human full open reading frames in Gateway(TM) system entry vector (pDONR201).</title>
        <authorList>
            <person name="Ebert L."/>
            <person name="Schick M."/>
            <person name="Neubert P."/>
            <person name="Schatten R."/>
            <person name="Henze S."/>
            <person name="Korn B."/>
        </authorList>
    </citation>
    <scope>PARTIAL NUCLEOTIDE SEQUENCE [LARGE SCALE MRNA]</scope>
</reference>
<reference key="6">
    <citation type="journal article" date="2006" name="J. Biol. Chem.">
        <title>Large store-operated calcium selective currents due to co-expression of Orai1 or Orai2 with the intracellular calcium sensor, Stim1.</title>
        <authorList>
            <person name="Mercer J.C."/>
            <person name="Dehaven W.I."/>
            <person name="Smyth J.T."/>
            <person name="Wedel B."/>
            <person name="Boyles R.R."/>
            <person name="Bird G.S."/>
            <person name="Putney J.W. Jr."/>
        </authorList>
    </citation>
    <scope>FUNCTION</scope>
    <scope>TRANSPORTER ACTIVITY</scope>
    <scope>ACTIVITY REGULATION</scope>
</reference>
<reference key="7">
    <citation type="journal article" date="2006" name="Nature">
        <title>A mutation in Orai1 causes immune deficiency by abrogating CRAC channel function.</title>
        <authorList>
            <person name="Feske S."/>
            <person name="Gwack Y."/>
            <person name="Prakriya M."/>
            <person name="Srikanth S."/>
            <person name="Puppel S.-H."/>
            <person name="Tanasa B."/>
            <person name="Hogan P.G."/>
            <person name="Lewis R.S."/>
            <person name="Daly M."/>
            <person name="Rao A."/>
        </authorList>
    </citation>
    <scope>IDENTIFICATION</scope>
</reference>
<reference key="8">
    <citation type="journal article" date="2007" name="Curr. Biol.">
        <title>CRACM1, CRACM2, and CRACM3 are store-operated Ca2+ channels with distinct functional properties.</title>
        <authorList>
            <person name="Lis A."/>
            <person name="Peinelt C."/>
            <person name="Beck A."/>
            <person name="Parvez S."/>
            <person name="Monteilh-Zoller M."/>
            <person name="Fleig A."/>
            <person name="Penner R."/>
        </authorList>
    </citation>
    <scope>FUNCTION</scope>
    <scope>TRANSPORTER ACTIVITY</scope>
    <scope>SUBUNIT</scope>
    <scope>INTERACTION WITH ORAI1 AND ORAI3</scope>
</reference>
<reference key="9">
    <citation type="journal article" date="2007" name="J. Biol. Chem.">
        <title>Calcium inhibition and calcium potentiation of orai1, orai2, and orai3 calcium release-activated calcium channels.</title>
        <authorList>
            <person name="Dehaven W.I."/>
            <person name="Smyth J.T."/>
            <person name="Boyles R.R."/>
            <person name="Putney J.W. Jr."/>
        </authorList>
    </citation>
    <scope>FUNCTION</scope>
    <scope>TRANSPORTER ACTIVITY</scope>
    <scope>SUBCELLULAR LOCATION</scope>
</reference>
<reference key="10">
    <citation type="journal article" date="2009" name="Nat. Cell Biol.">
        <title>SOAR and the polybasic STIM1 domains gate and regulate Orai channels.</title>
        <authorList>
            <person name="Yuan J.P."/>
            <person name="Zeng W."/>
            <person name="Dorwart M.R."/>
            <person name="Choi Y.J."/>
            <person name="Worley P.F."/>
            <person name="Muallem S."/>
        </authorList>
    </citation>
    <scope>FUNCTION</scope>
    <scope>TRANSPORTER ACTIVITY</scope>
</reference>
<reference key="11">
    <citation type="journal article" date="2009" name="Proc. Natl. Acad. Sci. U.S.A.">
        <title>Molecular determinants of fast Ca2+-dependent inactivation and gating of the Orai channels.</title>
        <authorList>
            <person name="Lee K.P."/>
            <person name="Yuan J.P."/>
            <person name="Zeng W."/>
            <person name="So I."/>
            <person name="Worley P.F."/>
            <person name="Muallem S."/>
        </authorList>
    </citation>
    <scope>FUNCTION</scope>
    <scope>TRANSPORTER ACTIVITY</scope>
    <scope>ACTIVITY REGULATION</scope>
    <scope>SUBCELLULAR LOCATION</scope>
    <scope>INTERACTION WITH STIM1</scope>
    <scope>MUTAGENESIS OF GLU-233; GLU-235 AND GLU-236</scope>
</reference>
<reference key="12">
    <citation type="journal article" date="2010" name="Nat. Cell Biol.">
        <title>A novel EF-hand protein, CRACR2A, is a cytosolic Ca2+ sensor that stabilizes CRAC channels in T cells.</title>
        <authorList>
            <person name="Srikanth S."/>
            <person name="Jung H.J."/>
            <person name="Kim K.D."/>
            <person name="Souda P."/>
            <person name="Whitelegge J."/>
            <person name="Gwack Y."/>
        </authorList>
    </citation>
    <scope>INTERACTION WITH CRACR2A</scope>
</reference>
<reference key="13">
    <citation type="journal article" date="2020" name="Nat. Commun.">
        <title>The native ORAI channel trio underlies the diversity of Ca2+ signaling events.</title>
        <authorList>
            <person name="Yoast R.E."/>
            <person name="Emrich S.M."/>
            <person name="Zhang X."/>
            <person name="Xin P."/>
            <person name="Johnson M.T."/>
            <person name="Fike A.J."/>
            <person name="Walter V."/>
            <person name="Hempel N."/>
            <person name="Yule D.I."/>
            <person name="Sneyd J."/>
            <person name="Gill D.L."/>
            <person name="Trebak M."/>
        </authorList>
    </citation>
    <scope>FUNCTION</scope>
    <scope>TRANSPORTER ACTIVITY</scope>
    <scope>INTERACTION WITH STIM1; ORAI1 AND ORAI3</scope>
    <scope>SUBUNIT</scope>
    <scope>MUTAGENESIS OF GLU-80</scope>
</reference>
<reference key="14">
    <citation type="journal article" date="2021" name="Proc. Natl. Acad. Sci. U.S.A.">
        <title>The N terminus of Orai1 couples to the AKAP79 signaling complex to drive NFAT1 activation by local Ca2+ entry.</title>
        <authorList>
            <person name="Kar P."/>
            <person name="Lin Y.P."/>
            <person name="Bhardwaj R."/>
            <person name="Tucker C.J."/>
            <person name="Bird G.S."/>
            <person name="Hediger M.A."/>
            <person name="Monico C."/>
            <person name="Amin N."/>
            <person name="Parekh A.B."/>
        </authorList>
    </citation>
    <scope>FUNCTION</scope>
    <scope>TRANSPORTER ACTIVITY</scope>
</reference>
<protein>
    <recommendedName>
        <fullName>Protein orai-2</fullName>
    </recommendedName>
    <alternativeName>
        <fullName>CAP-binding protein complex-interacting protein 2</fullName>
    </alternativeName>
    <alternativeName>
        <fullName>Transmembrane protein 142B</fullName>
    </alternativeName>
</protein>
<organism>
    <name type="scientific">Homo sapiens</name>
    <name type="common">Human</name>
    <dbReference type="NCBI Taxonomy" id="9606"/>
    <lineage>
        <taxon>Eukaryota</taxon>
        <taxon>Metazoa</taxon>
        <taxon>Chordata</taxon>
        <taxon>Craniata</taxon>
        <taxon>Vertebrata</taxon>
        <taxon>Euteleostomi</taxon>
        <taxon>Mammalia</taxon>
        <taxon>Eutheria</taxon>
        <taxon>Euarchontoglires</taxon>
        <taxon>Primates</taxon>
        <taxon>Haplorrhini</taxon>
        <taxon>Catarrhini</taxon>
        <taxon>Hominidae</taxon>
        <taxon>Homo</taxon>
    </lineage>
</organism>